<feature type="chain" id="PRO_1000022770" description="Trigger factor">
    <location>
        <begin position="1"/>
        <end position="427"/>
    </location>
</feature>
<feature type="domain" description="PPIase FKBP-type" evidence="1">
    <location>
        <begin position="163"/>
        <end position="248"/>
    </location>
</feature>
<protein>
    <recommendedName>
        <fullName evidence="1">Trigger factor</fullName>
        <shortName evidence="1">TF</shortName>
        <ecNumber evidence="1">5.2.1.8</ecNumber>
    </recommendedName>
    <alternativeName>
        <fullName evidence="1">PPIase</fullName>
    </alternativeName>
</protein>
<proteinExistence type="inferred from homology"/>
<organism>
    <name type="scientific">Streptococcus suis (strain 05ZYH33)</name>
    <dbReference type="NCBI Taxonomy" id="391295"/>
    <lineage>
        <taxon>Bacteria</taxon>
        <taxon>Bacillati</taxon>
        <taxon>Bacillota</taxon>
        <taxon>Bacilli</taxon>
        <taxon>Lactobacillales</taxon>
        <taxon>Streptococcaceae</taxon>
        <taxon>Streptococcus</taxon>
    </lineage>
</organism>
<sequence>MSVSFEAKETNRGVLTFTIGQDAIKPELDRVFNKVKKDINLPGFRKGHLPRAVFNQKFGEEALYQDVVNALLPAAYEAAVAEAGLEVVAQPKIDVVSMEKGQDWTITAEVVTKPEVKLGDYKNLAVSVEATKEVTDEEVDAKIEAARNNLAELVIKEGPAAEGDTVVIDFVGSIDGVEFDGGKGENFSLGLGSGQFIPGFEAQLVGHAAGEEVNVEVTFPEDYQAADLAGKQALFVTKIHEVKAKEVPALDDELAKDIDEEVETLDELKAKYRKELEASKEVAFDDAVESAALELAVENAEIVELPEEMIHEEVHRAINEFLGGMQQQGISPDMYFQITGTTREDLHKQYEADAEKRTKTNLVVEAVAKAEGFEATEEEINKEIEDLAATYNMEVAQVRSLLSPEMLKHDIAVKKAVEVITSTATVK</sequence>
<comment type="function">
    <text evidence="1">Involved in protein export. Acts as a chaperone by maintaining the newly synthesized protein in an open conformation. Functions as a peptidyl-prolyl cis-trans isomerase.</text>
</comment>
<comment type="catalytic activity">
    <reaction evidence="1">
        <text>[protein]-peptidylproline (omega=180) = [protein]-peptidylproline (omega=0)</text>
        <dbReference type="Rhea" id="RHEA:16237"/>
        <dbReference type="Rhea" id="RHEA-COMP:10747"/>
        <dbReference type="Rhea" id="RHEA-COMP:10748"/>
        <dbReference type="ChEBI" id="CHEBI:83833"/>
        <dbReference type="ChEBI" id="CHEBI:83834"/>
        <dbReference type="EC" id="5.2.1.8"/>
    </reaction>
</comment>
<comment type="subcellular location">
    <subcellularLocation>
        <location>Cytoplasm</location>
    </subcellularLocation>
    <text evidence="1">About half TF is bound to the ribosome near the polypeptide exit tunnel while the other half is free in the cytoplasm.</text>
</comment>
<comment type="domain">
    <text evidence="1">Consists of 3 domains; the N-terminus binds the ribosome, the middle domain has PPIase activity, while the C-terminus has intrinsic chaperone activity on its own.</text>
</comment>
<comment type="similarity">
    <text evidence="1">Belongs to the FKBP-type PPIase family. Tig subfamily.</text>
</comment>
<name>TIG_STRSY</name>
<keyword id="KW-0131">Cell cycle</keyword>
<keyword id="KW-0132">Cell division</keyword>
<keyword id="KW-0143">Chaperone</keyword>
<keyword id="KW-0963">Cytoplasm</keyword>
<keyword id="KW-0413">Isomerase</keyword>
<keyword id="KW-0697">Rotamase</keyword>
<accession>A4VT57</accession>
<dbReference type="EC" id="5.2.1.8" evidence="1"/>
<dbReference type="EMBL" id="CP000407">
    <property type="protein sequence ID" value="ABP89296.1"/>
    <property type="molecule type" value="Genomic_DNA"/>
</dbReference>
<dbReference type="SMR" id="A4VT57"/>
<dbReference type="STRING" id="391295.SSU05_0328"/>
<dbReference type="KEGG" id="ssu:SSU05_0328"/>
<dbReference type="eggNOG" id="COG0544">
    <property type="taxonomic scope" value="Bacteria"/>
</dbReference>
<dbReference type="HOGENOM" id="CLU_033058_3_2_9"/>
<dbReference type="GO" id="GO:0005737">
    <property type="term" value="C:cytoplasm"/>
    <property type="evidence" value="ECO:0007669"/>
    <property type="project" value="UniProtKB-SubCell"/>
</dbReference>
<dbReference type="GO" id="GO:0003755">
    <property type="term" value="F:peptidyl-prolyl cis-trans isomerase activity"/>
    <property type="evidence" value="ECO:0007669"/>
    <property type="project" value="UniProtKB-UniRule"/>
</dbReference>
<dbReference type="GO" id="GO:0044183">
    <property type="term" value="F:protein folding chaperone"/>
    <property type="evidence" value="ECO:0007669"/>
    <property type="project" value="TreeGrafter"/>
</dbReference>
<dbReference type="GO" id="GO:0043022">
    <property type="term" value="F:ribosome binding"/>
    <property type="evidence" value="ECO:0007669"/>
    <property type="project" value="TreeGrafter"/>
</dbReference>
<dbReference type="GO" id="GO:0051083">
    <property type="term" value="P:'de novo' cotranslational protein folding"/>
    <property type="evidence" value="ECO:0007669"/>
    <property type="project" value="TreeGrafter"/>
</dbReference>
<dbReference type="GO" id="GO:0051301">
    <property type="term" value="P:cell division"/>
    <property type="evidence" value="ECO:0007669"/>
    <property type="project" value="UniProtKB-KW"/>
</dbReference>
<dbReference type="GO" id="GO:0061077">
    <property type="term" value="P:chaperone-mediated protein folding"/>
    <property type="evidence" value="ECO:0007669"/>
    <property type="project" value="TreeGrafter"/>
</dbReference>
<dbReference type="GO" id="GO:0015031">
    <property type="term" value="P:protein transport"/>
    <property type="evidence" value="ECO:0007669"/>
    <property type="project" value="UniProtKB-UniRule"/>
</dbReference>
<dbReference type="GO" id="GO:0043335">
    <property type="term" value="P:protein unfolding"/>
    <property type="evidence" value="ECO:0007669"/>
    <property type="project" value="TreeGrafter"/>
</dbReference>
<dbReference type="FunFam" id="3.10.50.40:FF:000001">
    <property type="entry name" value="Trigger factor"/>
    <property type="match status" value="1"/>
</dbReference>
<dbReference type="Gene3D" id="3.10.50.40">
    <property type="match status" value="1"/>
</dbReference>
<dbReference type="Gene3D" id="3.30.70.1050">
    <property type="entry name" value="Trigger factor ribosome-binding domain"/>
    <property type="match status" value="1"/>
</dbReference>
<dbReference type="Gene3D" id="1.10.3120.10">
    <property type="entry name" value="Trigger factor, C-terminal domain"/>
    <property type="match status" value="1"/>
</dbReference>
<dbReference type="HAMAP" id="MF_00303">
    <property type="entry name" value="Trigger_factor_Tig"/>
    <property type="match status" value="1"/>
</dbReference>
<dbReference type="InterPro" id="IPR046357">
    <property type="entry name" value="PPIase_dom_sf"/>
</dbReference>
<dbReference type="InterPro" id="IPR001179">
    <property type="entry name" value="PPIase_FKBP_dom"/>
</dbReference>
<dbReference type="InterPro" id="IPR005215">
    <property type="entry name" value="Trig_fac"/>
</dbReference>
<dbReference type="InterPro" id="IPR008880">
    <property type="entry name" value="Trigger_fac_C"/>
</dbReference>
<dbReference type="InterPro" id="IPR037041">
    <property type="entry name" value="Trigger_fac_C_sf"/>
</dbReference>
<dbReference type="InterPro" id="IPR008881">
    <property type="entry name" value="Trigger_fac_ribosome-bd_bac"/>
</dbReference>
<dbReference type="InterPro" id="IPR036611">
    <property type="entry name" value="Trigger_fac_ribosome-bd_sf"/>
</dbReference>
<dbReference type="InterPro" id="IPR027304">
    <property type="entry name" value="Trigger_fact/SurA_dom_sf"/>
</dbReference>
<dbReference type="NCBIfam" id="TIGR00115">
    <property type="entry name" value="tig"/>
    <property type="match status" value="1"/>
</dbReference>
<dbReference type="PANTHER" id="PTHR30560">
    <property type="entry name" value="TRIGGER FACTOR CHAPERONE AND PEPTIDYL-PROLYL CIS/TRANS ISOMERASE"/>
    <property type="match status" value="1"/>
</dbReference>
<dbReference type="PANTHER" id="PTHR30560:SF3">
    <property type="entry name" value="TRIGGER FACTOR-LIKE PROTEIN TIG, CHLOROPLASTIC"/>
    <property type="match status" value="1"/>
</dbReference>
<dbReference type="Pfam" id="PF00254">
    <property type="entry name" value="FKBP_C"/>
    <property type="match status" value="1"/>
</dbReference>
<dbReference type="Pfam" id="PF05698">
    <property type="entry name" value="Trigger_C"/>
    <property type="match status" value="1"/>
</dbReference>
<dbReference type="Pfam" id="PF05697">
    <property type="entry name" value="Trigger_N"/>
    <property type="match status" value="1"/>
</dbReference>
<dbReference type="PIRSF" id="PIRSF003095">
    <property type="entry name" value="Trigger_factor"/>
    <property type="match status" value="1"/>
</dbReference>
<dbReference type="SUPFAM" id="SSF54534">
    <property type="entry name" value="FKBP-like"/>
    <property type="match status" value="1"/>
</dbReference>
<dbReference type="SUPFAM" id="SSF109998">
    <property type="entry name" value="Triger factor/SurA peptide-binding domain-like"/>
    <property type="match status" value="1"/>
</dbReference>
<dbReference type="SUPFAM" id="SSF102735">
    <property type="entry name" value="Trigger factor ribosome-binding domain"/>
    <property type="match status" value="1"/>
</dbReference>
<dbReference type="PROSITE" id="PS50059">
    <property type="entry name" value="FKBP_PPIASE"/>
    <property type="match status" value="1"/>
</dbReference>
<gene>
    <name evidence="1" type="primary">tig</name>
    <name type="ordered locus">SSU05_0328</name>
</gene>
<reference key="1">
    <citation type="journal article" date="2007" name="PLoS ONE">
        <title>A glimpse of streptococcal toxic shock syndrome from comparative genomics of S. suis 2 Chinese isolates.</title>
        <authorList>
            <person name="Chen C."/>
            <person name="Tang J."/>
            <person name="Dong W."/>
            <person name="Wang C."/>
            <person name="Feng Y."/>
            <person name="Wang J."/>
            <person name="Zheng F."/>
            <person name="Pan X."/>
            <person name="Liu D."/>
            <person name="Li M."/>
            <person name="Song Y."/>
            <person name="Zhu X."/>
            <person name="Sun H."/>
            <person name="Feng T."/>
            <person name="Guo Z."/>
            <person name="Ju A."/>
            <person name="Ge J."/>
            <person name="Dong Y."/>
            <person name="Sun W."/>
            <person name="Jiang Y."/>
            <person name="Wang J."/>
            <person name="Yan J."/>
            <person name="Yang H."/>
            <person name="Wang X."/>
            <person name="Gao G.F."/>
            <person name="Yang R."/>
            <person name="Wang J."/>
            <person name="Yu J."/>
        </authorList>
    </citation>
    <scope>NUCLEOTIDE SEQUENCE [LARGE SCALE GENOMIC DNA]</scope>
    <source>
        <strain>05ZYH33</strain>
    </source>
</reference>
<evidence type="ECO:0000255" key="1">
    <source>
        <dbReference type="HAMAP-Rule" id="MF_00303"/>
    </source>
</evidence>